<organism>
    <name type="scientific">Brucella suis biovar 1 (strain 1330)</name>
    <dbReference type="NCBI Taxonomy" id="204722"/>
    <lineage>
        <taxon>Bacteria</taxon>
        <taxon>Pseudomonadati</taxon>
        <taxon>Pseudomonadota</taxon>
        <taxon>Alphaproteobacteria</taxon>
        <taxon>Hyphomicrobiales</taxon>
        <taxon>Brucellaceae</taxon>
        <taxon>Brucella/Ochrobactrum group</taxon>
        <taxon>Brucella</taxon>
    </lineage>
</organism>
<accession>Q8FWV4</accession>
<accession>G0KC80</accession>
<gene>
    <name evidence="1" type="primary">hdeA</name>
    <name type="ordered locus">BRA0341</name>
    <name type="ordered locus">BS1330_II0338</name>
</gene>
<keyword id="KW-0143">Chaperone</keyword>
<keyword id="KW-1015">Disulfide bond</keyword>
<keyword id="KW-0574">Periplasm</keyword>
<keyword id="KW-0732">Signal</keyword>
<evidence type="ECO:0000255" key="1">
    <source>
        <dbReference type="HAMAP-Rule" id="MF_00946"/>
    </source>
</evidence>
<sequence length="114" mass="12362">MIKALFNKNTALAAVTILALSGGAMAESAKTHKTDMAKKKVSELTCEDFNGLEESFKPTVVGWVVGFNKKGKEEDAVIDVDGIETVTPAIIEACKQEPKASFWKKAEAELKKVF</sequence>
<proteinExistence type="inferred from homology"/>
<protein>
    <recommendedName>
        <fullName evidence="1">Probable acid stress chaperone HdeA</fullName>
    </recommendedName>
</protein>
<reference key="1">
    <citation type="journal article" date="2002" name="Proc. Natl. Acad. Sci. U.S.A.">
        <title>The Brucella suis genome reveals fundamental similarities between animal and plant pathogens and symbionts.</title>
        <authorList>
            <person name="Paulsen I.T."/>
            <person name="Seshadri R."/>
            <person name="Nelson K.E."/>
            <person name="Eisen J.A."/>
            <person name="Heidelberg J.F."/>
            <person name="Read T.D."/>
            <person name="Dodson R.J."/>
            <person name="Umayam L.A."/>
            <person name="Brinkac L.M."/>
            <person name="Beanan M.J."/>
            <person name="Daugherty S.C."/>
            <person name="DeBoy R.T."/>
            <person name="Durkin A.S."/>
            <person name="Kolonay J.F."/>
            <person name="Madupu R."/>
            <person name="Nelson W.C."/>
            <person name="Ayodeji B."/>
            <person name="Kraul M."/>
            <person name="Shetty J."/>
            <person name="Malek J.A."/>
            <person name="Van Aken S.E."/>
            <person name="Riedmuller S."/>
            <person name="Tettelin H."/>
            <person name="Gill S.R."/>
            <person name="White O."/>
            <person name="Salzberg S.L."/>
            <person name="Hoover D.L."/>
            <person name="Lindler L.E."/>
            <person name="Halling S.M."/>
            <person name="Boyle S.M."/>
            <person name="Fraser C.M."/>
        </authorList>
    </citation>
    <scope>NUCLEOTIDE SEQUENCE [LARGE SCALE GENOMIC DNA]</scope>
    <source>
        <strain>1330</strain>
    </source>
</reference>
<reference key="2">
    <citation type="journal article" date="2011" name="J. Bacteriol.">
        <title>Revised genome sequence of Brucella suis 1330.</title>
        <authorList>
            <person name="Tae H."/>
            <person name="Shallom S."/>
            <person name="Settlage R."/>
            <person name="Preston D."/>
            <person name="Adams L.G."/>
            <person name="Garner H.R."/>
        </authorList>
    </citation>
    <scope>NUCLEOTIDE SEQUENCE [LARGE SCALE GENOMIC DNA]</scope>
    <source>
        <strain>1330</strain>
    </source>
</reference>
<name>HDEA_BRUSU</name>
<dbReference type="EMBL" id="AE014292">
    <property type="protein sequence ID" value="AAN33539.1"/>
    <property type="molecule type" value="Genomic_DNA"/>
</dbReference>
<dbReference type="EMBL" id="CP002998">
    <property type="protein sequence ID" value="AEM19818.1"/>
    <property type="molecule type" value="Genomic_DNA"/>
</dbReference>
<dbReference type="RefSeq" id="WP_006191791.1">
    <property type="nucleotide sequence ID" value="NZ_KN046805.1"/>
</dbReference>
<dbReference type="SMR" id="Q8FWV4"/>
<dbReference type="GeneID" id="45053399"/>
<dbReference type="KEGG" id="bms:BRA0341"/>
<dbReference type="KEGG" id="bsi:BS1330_II0338"/>
<dbReference type="PATRIC" id="fig|204722.21.peg.161"/>
<dbReference type="HOGENOM" id="CLU_170142_0_0_5"/>
<dbReference type="PhylomeDB" id="Q8FWV4"/>
<dbReference type="PRO" id="PR:Q8FWV4"/>
<dbReference type="Proteomes" id="UP000007104">
    <property type="component" value="Chromosome II"/>
</dbReference>
<dbReference type="GO" id="GO:0030288">
    <property type="term" value="C:outer membrane-bounded periplasmic space"/>
    <property type="evidence" value="ECO:0007669"/>
    <property type="project" value="InterPro"/>
</dbReference>
<dbReference type="GO" id="GO:1990451">
    <property type="term" value="P:cellular stress response to acidic pH"/>
    <property type="evidence" value="ECO:0007669"/>
    <property type="project" value="UniProtKB-UniRule"/>
</dbReference>
<dbReference type="Gene3D" id="1.10.890.10">
    <property type="entry name" value="HNS-dependent expression A"/>
    <property type="match status" value="1"/>
</dbReference>
<dbReference type="HAMAP" id="MF_00946">
    <property type="entry name" value="HdeA"/>
    <property type="match status" value="1"/>
</dbReference>
<dbReference type="InterPro" id="IPR024972">
    <property type="entry name" value="HdeA"/>
</dbReference>
<dbReference type="InterPro" id="IPR038303">
    <property type="entry name" value="HdeA/HdeB_sf"/>
</dbReference>
<dbReference type="InterPro" id="IPR036831">
    <property type="entry name" value="HdeA_sf"/>
</dbReference>
<dbReference type="InterPro" id="IPR010486">
    <property type="entry name" value="HNS-dep_expression_A/B"/>
</dbReference>
<dbReference type="NCBIfam" id="NF007576">
    <property type="entry name" value="PRK10208.1"/>
    <property type="match status" value="1"/>
</dbReference>
<dbReference type="Pfam" id="PF06411">
    <property type="entry name" value="HdeA"/>
    <property type="match status" value="1"/>
</dbReference>
<dbReference type="PIRSF" id="PIRSF009564">
    <property type="entry name" value="HNS-dep_expression_A"/>
    <property type="match status" value="1"/>
</dbReference>
<dbReference type="SUPFAM" id="SSF47752">
    <property type="entry name" value="Protein HNS-dependent expression A, HdeA"/>
    <property type="match status" value="1"/>
</dbReference>
<comment type="function">
    <text evidence="1">Required for optimal acid stress protection. Exhibits a chaperone-like activity only at low pH by suppressing non-specifically the aggregation of denaturated periplasmic proteins.</text>
</comment>
<comment type="subcellular location">
    <subcellularLocation>
        <location evidence="1">Periplasm</location>
    </subcellularLocation>
</comment>
<comment type="similarity">
    <text evidence="1">Belongs to the HdeA family.</text>
</comment>
<feature type="signal peptide" evidence="1">
    <location>
        <begin position="1"/>
        <end position="26"/>
    </location>
</feature>
<feature type="chain" id="PRO_0000338637" description="Probable acid stress chaperone HdeA">
    <location>
        <begin position="27"/>
        <end position="114"/>
    </location>
</feature>
<feature type="disulfide bond" evidence="1">
    <location>
        <begin position="46"/>
        <end position="94"/>
    </location>
</feature>